<feature type="chain" id="PRO_0000189221" description="4-diphosphocytidyl-2-C-methyl-D-erythritol kinase">
    <location>
        <begin position="1"/>
        <end position="302"/>
    </location>
</feature>
<feature type="active site" evidence="1">
    <location>
        <position position="11"/>
    </location>
</feature>
<feature type="active site" evidence="1">
    <location>
        <position position="135"/>
    </location>
</feature>
<feature type="binding site" evidence="1">
    <location>
        <begin position="93"/>
        <end position="103"/>
    </location>
    <ligand>
        <name>ATP</name>
        <dbReference type="ChEBI" id="CHEBI:30616"/>
    </ligand>
</feature>
<reference key="1">
    <citation type="journal article" date="2003" name="DNA Res.">
        <title>Complete genome structure of Gloeobacter violaceus PCC 7421, a cyanobacterium that lacks thylakoids.</title>
        <authorList>
            <person name="Nakamura Y."/>
            <person name="Kaneko T."/>
            <person name="Sato S."/>
            <person name="Mimuro M."/>
            <person name="Miyashita H."/>
            <person name="Tsuchiya T."/>
            <person name="Sasamoto S."/>
            <person name="Watanabe A."/>
            <person name="Kawashima K."/>
            <person name="Kishida Y."/>
            <person name="Kiyokawa C."/>
            <person name="Kohara M."/>
            <person name="Matsumoto M."/>
            <person name="Matsuno A."/>
            <person name="Nakazaki N."/>
            <person name="Shimpo S."/>
            <person name="Takeuchi C."/>
            <person name="Yamada M."/>
            <person name="Tabata S."/>
        </authorList>
    </citation>
    <scope>NUCLEOTIDE SEQUENCE [LARGE SCALE GENOMIC DNA]</scope>
    <source>
        <strain>ATCC 29082 / PCC 7421</strain>
    </source>
</reference>
<name>ISPE_GLOVI</name>
<organism>
    <name type="scientific">Gloeobacter violaceus (strain ATCC 29082 / PCC 7421)</name>
    <dbReference type="NCBI Taxonomy" id="251221"/>
    <lineage>
        <taxon>Bacteria</taxon>
        <taxon>Bacillati</taxon>
        <taxon>Cyanobacteriota</taxon>
        <taxon>Cyanophyceae</taxon>
        <taxon>Gloeobacterales</taxon>
        <taxon>Gloeobacteraceae</taxon>
        <taxon>Gloeobacter</taxon>
    </lineage>
</organism>
<proteinExistence type="inferred from homology"/>
<sequence length="302" mass="31889">MKTVRLRAAAKINLYLEILGVRPDNFHELVMVLQSVDLADTVTLRAAPTTRVSCSHPLVPNDRTNLAVRAVEVLQKHTGIDEGVEIVIEKRIPVASGLAGGSTDAAAVLAGLNVLWDLGLTQRQLQSLGAQIGSDIPFCVTGGTALAMGRGEVLSPLPALKGVYLVLAKLADLQVSTAWAYQTYRREYLSEGTAPRARTSALLSAVASQEVARIAPLLHNDLERAVLPAYPQVSALREHLVSAGALGAMMSGSGPAVFGLARDRAHAEAVCAVLAGEPGLELFVCKTQQAGILMEESESSDL</sequence>
<evidence type="ECO:0000255" key="1">
    <source>
        <dbReference type="HAMAP-Rule" id="MF_00061"/>
    </source>
</evidence>
<gene>
    <name evidence="1" type="primary">ispE</name>
    <name type="ordered locus">gll0102</name>
</gene>
<protein>
    <recommendedName>
        <fullName evidence="1">4-diphosphocytidyl-2-C-methyl-D-erythritol kinase</fullName>
        <shortName evidence="1">CMK</shortName>
        <ecNumber evidence="1">2.7.1.148</ecNumber>
    </recommendedName>
    <alternativeName>
        <fullName evidence="1">4-(cytidine-5'-diphospho)-2-C-methyl-D-erythritol kinase</fullName>
    </alternativeName>
</protein>
<dbReference type="EC" id="2.7.1.148" evidence="1"/>
<dbReference type="EMBL" id="BA000045">
    <property type="protein sequence ID" value="BAC88043.1"/>
    <property type="molecule type" value="Genomic_DNA"/>
</dbReference>
<dbReference type="RefSeq" id="NP_923048.1">
    <property type="nucleotide sequence ID" value="NC_005125.1"/>
</dbReference>
<dbReference type="RefSeq" id="WP_011140106.1">
    <property type="nucleotide sequence ID" value="NC_005125.1"/>
</dbReference>
<dbReference type="SMR" id="Q7NPF3"/>
<dbReference type="FunCoup" id="Q7NPF3">
    <property type="interactions" value="162"/>
</dbReference>
<dbReference type="STRING" id="251221.gene:10757571"/>
<dbReference type="EnsemblBacteria" id="BAC88043">
    <property type="protein sequence ID" value="BAC88043"/>
    <property type="gene ID" value="BAC88043"/>
</dbReference>
<dbReference type="KEGG" id="gvi:gll0102"/>
<dbReference type="PATRIC" id="fig|251221.4.peg.104"/>
<dbReference type="eggNOG" id="COG1947">
    <property type="taxonomic scope" value="Bacteria"/>
</dbReference>
<dbReference type="HOGENOM" id="CLU_053057_1_1_3"/>
<dbReference type="InParanoid" id="Q7NPF3"/>
<dbReference type="OrthoDB" id="9809438at2"/>
<dbReference type="PhylomeDB" id="Q7NPF3"/>
<dbReference type="UniPathway" id="UPA00056">
    <property type="reaction ID" value="UER00094"/>
</dbReference>
<dbReference type="Proteomes" id="UP000000557">
    <property type="component" value="Chromosome"/>
</dbReference>
<dbReference type="GO" id="GO:0050515">
    <property type="term" value="F:4-(cytidine 5'-diphospho)-2-C-methyl-D-erythritol kinase activity"/>
    <property type="evidence" value="ECO:0000318"/>
    <property type="project" value="GO_Central"/>
</dbReference>
<dbReference type="GO" id="GO:0005524">
    <property type="term" value="F:ATP binding"/>
    <property type="evidence" value="ECO:0007669"/>
    <property type="project" value="UniProtKB-UniRule"/>
</dbReference>
<dbReference type="GO" id="GO:0019288">
    <property type="term" value="P:isopentenyl diphosphate biosynthetic process, methylerythritol 4-phosphate pathway"/>
    <property type="evidence" value="ECO:0007669"/>
    <property type="project" value="UniProtKB-UniRule"/>
</dbReference>
<dbReference type="GO" id="GO:0016114">
    <property type="term" value="P:terpenoid biosynthetic process"/>
    <property type="evidence" value="ECO:0007669"/>
    <property type="project" value="InterPro"/>
</dbReference>
<dbReference type="FunFam" id="3.30.70.890:FF:000006">
    <property type="entry name" value="4-diphosphocytidyl-2-C-methyl-D-erythritol kinase"/>
    <property type="match status" value="1"/>
</dbReference>
<dbReference type="Gene3D" id="3.30.230.10">
    <property type="match status" value="1"/>
</dbReference>
<dbReference type="Gene3D" id="3.30.70.890">
    <property type="entry name" value="GHMP kinase, C-terminal domain"/>
    <property type="match status" value="1"/>
</dbReference>
<dbReference type="HAMAP" id="MF_00061">
    <property type="entry name" value="IspE"/>
    <property type="match status" value="1"/>
</dbReference>
<dbReference type="InterPro" id="IPR013750">
    <property type="entry name" value="GHMP_kinase_C_dom"/>
</dbReference>
<dbReference type="InterPro" id="IPR036554">
    <property type="entry name" value="GHMP_kinase_C_sf"/>
</dbReference>
<dbReference type="InterPro" id="IPR006204">
    <property type="entry name" value="GHMP_kinase_N_dom"/>
</dbReference>
<dbReference type="InterPro" id="IPR004424">
    <property type="entry name" value="IspE"/>
</dbReference>
<dbReference type="InterPro" id="IPR020568">
    <property type="entry name" value="Ribosomal_Su5_D2-typ_SF"/>
</dbReference>
<dbReference type="InterPro" id="IPR014721">
    <property type="entry name" value="Ribsml_uS5_D2-typ_fold_subgr"/>
</dbReference>
<dbReference type="NCBIfam" id="TIGR00154">
    <property type="entry name" value="ispE"/>
    <property type="match status" value="1"/>
</dbReference>
<dbReference type="PANTHER" id="PTHR43527">
    <property type="entry name" value="4-DIPHOSPHOCYTIDYL-2-C-METHYL-D-ERYTHRITOL KINASE, CHLOROPLASTIC"/>
    <property type="match status" value="1"/>
</dbReference>
<dbReference type="PANTHER" id="PTHR43527:SF2">
    <property type="entry name" value="4-DIPHOSPHOCYTIDYL-2-C-METHYL-D-ERYTHRITOL KINASE, CHLOROPLASTIC"/>
    <property type="match status" value="1"/>
</dbReference>
<dbReference type="Pfam" id="PF08544">
    <property type="entry name" value="GHMP_kinases_C"/>
    <property type="match status" value="1"/>
</dbReference>
<dbReference type="Pfam" id="PF00288">
    <property type="entry name" value="GHMP_kinases_N"/>
    <property type="match status" value="1"/>
</dbReference>
<dbReference type="PIRSF" id="PIRSF010376">
    <property type="entry name" value="IspE"/>
    <property type="match status" value="1"/>
</dbReference>
<dbReference type="SUPFAM" id="SSF55060">
    <property type="entry name" value="GHMP Kinase, C-terminal domain"/>
    <property type="match status" value="1"/>
</dbReference>
<dbReference type="SUPFAM" id="SSF54211">
    <property type="entry name" value="Ribosomal protein S5 domain 2-like"/>
    <property type="match status" value="1"/>
</dbReference>
<comment type="function">
    <text evidence="1">Catalyzes the phosphorylation of the position 2 hydroxy group of 4-diphosphocytidyl-2C-methyl-D-erythritol.</text>
</comment>
<comment type="catalytic activity">
    <reaction evidence="1">
        <text>4-CDP-2-C-methyl-D-erythritol + ATP = 4-CDP-2-C-methyl-D-erythritol 2-phosphate + ADP + H(+)</text>
        <dbReference type="Rhea" id="RHEA:18437"/>
        <dbReference type="ChEBI" id="CHEBI:15378"/>
        <dbReference type="ChEBI" id="CHEBI:30616"/>
        <dbReference type="ChEBI" id="CHEBI:57823"/>
        <dbReference type="ChEBI" id="CHEBI:57919"/>
        <dbReference type="ChEBI" id="CHEBI:456216"/>
        <dbReference type="EC" id="2.7.1.148"/>
    </reaction>
</comment>
<comment type="pathway">
    <text evidence="1">Isoprenoid biosynthesis; isopentenyl diphosphate biosynthesis via DXP pathway; isopentenyl diphosphate from 1-deoxy-D-xylulose 5-phosphate: step 3/6.</text>
</comment>
<comment type="similarity">
    <text evidence="1">Belongs to the GHMP kinase family. IspE subfamily.</text>
</comment>
<accession>Q7NPF3</accession>
<keyword id="KW-0067">ATP-binding</keyword>
<keyword id="KW-0414">Isoprene biosynthesis</keyword>
<keyword id="KW-0418">Kinase</keyword>
<keyword id="KW-0547">Nucleotide-binding</keyword>
<keyword id="KW-1185">Reference proteome</keyword>
<keyword id="KW-0808">Transferase</keyword>